<accession>Q0T4U2</accession>
<name>CHBG_SHIF8</name>
<gene>
    <name evidence="1" type="primary">chbG</name>
    <name type="ordered locus">SFV_1487</name>
</gene>
<keyword id="KW-0119">Carbohydrate metabolism</keyword>
<keyword id="KW-0146">Chitin degradation</keyword>
<keyword id="KW-0963">Cytoplasm</keyword>
<keyword id="KW-0378">Hydrolase</keyword>
<keyword id="KW-0460">Magnesium</keyword>
<keyword id="KW-0479">Metal-binding</keyword>
<keyword id="KW-0624">Polysaccharide degradation</keyword>
<reference key="1">
    <citation type="journal article" date="2006" name="BMC Genomics">
        <title>Complete genome sequence of Shigella flexneri 5b and comparison with Shigella flexneri 2a.</title>
        <authorList>
            <person name="Nie H."/>
            <person name="Yang F."/>
            <person name="Zhang X."/>
            <person name="Yang J."/>
            <person name="Chen L."/>
            <person name="Wang J."/>
            <person name="Xiong Z."/>
            <person name="Peng J."/>
            <person name="Sun L."/>
            <person name="Dong J."/>
            <person name="Xue Y."/>
            <person name="Xu X."/>
            <person name="Chen S."/>
            <person name="Yao Z."/>
            <person name="Shen Y."/>
            <person name="Jin Q."/>
        </authorList>
    </citation>
    <scope>NUCLEOTIDE SEQUENCE [LARGE SCALE GENOMIC DNA]</scope>
    <source>
        <strain>8401</strain>
    </source>
</reference>
<sequence length="252" mass="27956">MERLLIVNADDFGLSKGQNYGIIEACRNGIVTSTTALVNGQAIDHAVQLSRDEPSLAIGMHFVLTMGKPLTAMPGLTRDGVLGKWIWQLAEEDALPLEEITQELASQYLRFIELFGRKPTHLDSHHHVHMFPQIFPIVARFAAEEGIALRIDRQPLSNAGDLPANLRSSQGFSSAFYGEEISEALFLQVLDDASHRGDPSLEVMCHPAFIDNTIRQSAYCFPRLTELEVLTSASLKYAIAERGYRLGSYLDV</sequence>
<proteinExistence type="inferred from homology"/>
<dbReference type="EC" id="3.5.1.105" evidence="1"/>
<dbReference type="EMBL" id="CP000266">
    <property type="protein sequence ID" value="ABF03673.1"/>
    <property type="molecule type" value="Genomic_DNA"/>
</dbReference>
<dbReference type="RefSeq" id="WP_000440442.1">
    <property type="nucleotide sequence ID" value="NC_008258.1"/>
</dbReference>
<dbReference type="SMR" id="Q0T4U2"/>
<dbReference type="KEGG" id="sfv:SFV_1487"/>
<dbReference type="HOGENOM" id="CLU_064244_4_1_6"/>
<dbReference type="UniPathway" id="UPA00349"/>
<dbReference type="Proteomes" id="UP000000659">
    <property type="component" value="Chromosome"/>
</dbReference>
<dbReference type="GO" id="GO:0005737">
    <property type="term" value="C:cytoplasm"/>
    <property type="evidence" value="ECO:0007669"/>
    <property type="project" value="UniProtKB-SubCell"/>
</dbReference>
<dbReference type="GO" id="GO:0036311">
    <property type="term" value="F:chitin disaccharide deacetylase activity"/>
    <property type="evidence" value="ECO:0007669"/>
    <property type="project" value="UniProtKB-UniRule"/>
</dbReference>
<dbReference type="GO" id="GO:0019213">
    <property type="term" value="F:deacetylase activity"/>
    <property type="evidence" value="ECO:0007669"/>
    <property type="project" value="TreeGrafter"/>
</dbReference>
<dbReference type="GO" id="GO:0046872">
    <property type="term" value="F:metal ion binding"/>
    <property type="evidence" value="ECO:0007669"/>
    <property type="project" value="UniProtKB-KW"/>
</dbReference>
<dbReference type="GO" id="GO:0006032">
    <property type="term" value="P:chitin catabolic process"/>
    <property type="evidence" value="ECO:0007669"/>
    <property type="project" value="UniProtKB-UniPathway"/>
</dbReference>
<dbReference type="GO" id="GO:0052777">
    <property type="term" value="P:diacetylchitobiose catabolic process"/>
    <property type="evidence" value="ECO:0007669"/>
    <property type="project" value="UniProtKB-UniRule"/>
</dbReference>
<dbReference type="GO" id="GO:0000272">
    <property type="term" value="P:polysaccharide catabolic process"/>
    <property type="evidence" value="ECO:0007669"/>
    <property type="project" value="UniProtKB-UniRule"/>
</dbReference>
<dbReference type="CDD" id="cd10803">
    <property type="entry name" value="YdjC_EF3048_like"/>
    <property type="match status" value="1"/>
</dbReference>
<dbReference type="FunFam" id="3.20.20.370:FF:000001">
    <property type="entry name" value="Chitooligosaccharide deacetylase"/>
    <property type="match status" value="1"/>
</dbReference>
<dbReference type="Gene3D" id="3.20.20.370">
    <property type="entry name" value="Glycoside hydrolase/deacetylase"/>
    <property type="match status" value="1"/>
</dbReference>
<dbReference type="HAMAP" id="MF_01246">
    <property type="entry name" value="COD"/>
    <property type="match status" value="1"/>
</dbReference>
<dbReference type="InterPro" id="IPR022948">
    <property type="entry name" value="COD_ChbG_bac"/>
</dbReference>
<dbReference type="InterPro" id="IPR011330">
    <property type="entry name" value="Glyco_hydro/deAcase_b/a-brl"/>
</dbReference>
<dbReference type="InterPro" id="IPR006879">
    <property type="entry name" value="YdjC-like"/>
</dbReference>
<dbReference type="NCBIfam" id="NF002559">
    <property type="entry name" value="PRK02134.1"/>
    <property type="match status" value="1"/>
</dbReference>
<dbReference type="PANTHER" id="PTHR31609:SF1">
    <property type="entry name" value="CARBOHYDRATE DEACETYLASE"/>
    <property type="match status" value="1"/>
</dbReference>
<dbReference type="PANTHER" id="PTHR31609">
    <property type="entry name" value="YDJC DEACETYLASE FAMILY MEMBER"/>
    <property type="match status" value="1"/>
</dbReference>
<dbReference type="Pfam" id="PF04794">
    <property type="entry name" value="YdjC"/>
    <property type="match status" value="1"/>
</dbReference>
<dbReference type="SUPFAM" id="SSF88713">
    <property type="entry name" value="Glycoside hydrolase/deacetylase"/>
    <property type="match status" value="1"/>
</dbReference>
<organism>
    <name type="scientific">Shigella flexneri serotype 5b (strain 8401)</name>
    <dbReference type="NCBI Taxonomy" id="373384"/>
    <lineage>
        <taxon>Bacteria</taxon>
        <taxon>Pseudomonadati</taxon>
        <taxon>Pseudomonadota</taxon>
        <taxon>Gammaproteobacteria</taxon>
        <taxon>Enterobacterales</taxon>
        <taxon>Enterobacteriaceae</taxon>
        <taxon>Shigella</taxon>
    </lineage>
</organism>
<protein>
    <recommendedName>
        <fullName evidence="1">Chitooligosaccharide deacetylase</fullName>
        <shortName evidence="1">COD</shortName>
        <ecNumber evidence="1">3.5.1.105</ecNumber>
    </recommendedName>
    <alternativeName>
        <fullName evidence="1">Chitin disaccharide deacetylase</fullName>
    </alternativeName>
    <alternativeName>
        <fullName evidence="1">Chitobiose deacetylase</fullName>
    </alternativeName>
    <alternativeName>
        <fullName evidence="1">Chitobiose-6P deacetylase</fullName>
    </alternativeName>
    <alternativeName>
        <fullName evidence="1">Chitotriose deacetylase</fullName>
    </alternativeName>
    <alternativeName>
        <fullName evidence="1">Chitotriose-6P deacetylase</fullName>
    </alternativeName>
</protein>
<evidence type="ECO:0000255" key="1">
    <source>
        <dbReference type="HAMAP-Rule" id="MF_01246"/>
    </source>
</evidence>
<comment type="function">
    <text evidence="1">Involved in the degradation of chitin. ChbG is essential for growth on the acetylated chitooligosaccharides chitobiose and chitotriose but is dispensable for growth on cellobiose and chitosan dimer, the deacetylated form of chitobiose. Deacetylation of chitobiose-6-P and chitotriose-6-P is necessary for both the activation of the chb promoter by the regulatory protein ChbR and the hydrolysis of phosphorylated beta-glucosides by the phospho-beta-glucosidase ChbF. Catalyzes the removal of only one acetyl group from chitobiose-6-P to yield monoacetylchitobiose-6-P, the inducer of ChbR and the substrate of ChbF.</text>
</comment>
<comment type="catalytic activity">
    <reaction evidence="1">
        <text>N,N'-diacetylchitobiose + H2O = N-acetyl-beta-D-glucosaminyl-(1-&gt;4)-D-glucosamine + acetate</text>
        <dbReference type="Rhea" id="RHEA:27469"/>
        <dbReference type="ChEBI" id="CHEBI:15377"/>
        <dbReference type="ChEBI" id="CHEBI:28681"/>
        <dbReference type="ChEBI" id="CHEBI:30089"/>
        <dbReference type="ChEBI" id="CHEBI:59910"/>
        <dbReference type="EC" id="3.5.1.105"/>
    </reaction>
</comment>
<comment type="catalytic activity">
    <reaction evidence="1">
        <text>diacetylchitobiose-6'-phosphate + H2O = N'-monoacetylchitobiose-6'-phosphate + acetate</text>
        <dbReference type="Rhea" id="RHEA:35083"/>
        <dbReference type="ChEBI" id="CHEBI:15377"/>
        <dbReference type="ChEBI" id="CHEBI:30089"/>
        <dbReference type="ChEBI" id="CHEBI:64883"/>
        <dbReference type="ChEBI" id="CHEBI:71315"/>
    </reaction>
</comment>
<comment type="cofactor">
    <cofactor evidence="1">
        <name>Mg(2+)</name>
        <dbReference type="ChEBI" id="CHEBI:18420"/>
    </cofactor>
</comment>
<comment type="pathway">
    <text evidence="1">Glycan degradation; chitin degradation.</text>
</comment>
<comment type="subunit">
    <text evidence="1">Homodimer.</text>
</comment>
<comment type="subcellular location">
    <subcellularLocation>
        <location evidence="1">Cytoplasm</location>
    </subcellularLocation>
</comment>
<comment type="similarity">
    <text evidence="1">Belongs to the YdjC deacetylase family. ChbG subfamily.</text>
</comment>
<feature type="chain" id="PRO_1000067088" description="Chitooligosaccharide deacetylase">
    <location>
        <begin position="1"/>
        <end position="252"/>
    </location>
</feature>
<feature type="binding site" evidence="1">
    <location>
        <position position="61"/>
    </location>
    <ligand>
        <name>Mg(2+)</name>
        <dbReference type="ChEBI" id="CHEBI:18420"/>
    </ligand>
</feature>
<feature type="binding site" evidence="1">
    <location>
        <position position="125"/>
    </location>
    <ligand>
        <name>Mg(2+)</name>
        <dbReference type="ChEBI" id="CHEBI:18420"/>
    </ligand>
</feature>